<dbReference type="EMBL" id="AC010155">
    <property type="protein sequence ID" value="AAF16769.1"/>
    <property type="molecule type" value="Genomic_DNA"/>
</dbReference>
<dbReference type="EMBL" id="CP002684">
    <property type="protein sequence ID" value="AEE30984.1"/>
    <property type="molecule type" value="Genomic_DNA"/>
</dbReference>
<dbReference type="PIR" id="A86411">
    <property type="entry name" value="A86411"/>
</dbReference>
<dbReference type="RefSeq" id="NP_174172.1">
    <property type="nucleotide sequence ID" value="NM_102618.2"/>
</dbReference>
<dbReference type="SMR" id="Q9SGP8"/>
<dbReference type="STRING" id="3702.Q9SGP8"/>
<dbReference type="PaxDb" id="3702-AT1G28500.1"/>
<dbReference type="ProteomicsDB" id="242474"/>
<dbReference type="DNASU" id="839750"/>
<dbReference type="EnsemblPlants" id="AT1G28500.1">
    <property type="protein sequence ID" value="AT1G28500.1"/>
    <property type="gene ID" value="AT1G28500"/>
</dbReference>
<dbReference type="GeneID" id="839750"/>
<dbReference type="Gramene" id="AT1G28500.1">
    <property type="protein sequence ID" value="AT1G28500.1"/>
    <property type="gene ID" value="AT1G28500"/>
</dbReference>
<dbReference type="KEGG" id="ath:AT1G28500"/>
<dbReference type="Araport" id="AT1G28500"/>
<dbReference type="TAIR" id="AT1G28500"/>
<dbReference type="HOGENOM" id="CLU_053767_0_1_1"/>
<dbReference type="InParanoid" id="Q9SGP8"/>
<dbReference type="OMA" id="KSEWQAT"/>
<dbReference type="PhylomeDB" id="Q9SGP8"/>
<dbReference type="PRO" id="PR:Q9SGP8"/>
<dbReference type="Proteomes" id="UP000006548">
    <property type="component" value="Chromosome 1"/>
</dbReference>
<dbReference type="ExpressionAtlas" id="Q9SGP8">
    <property type="expression patterns" value="baseline and differential"/>
</dbReference>
<dbReference type="InterPro" id="IPR006462">
    <property type="entry name" value="MS5"/>
</dbReference>
<dbReference type="NCBIfam" id="TIGR01572">
    <property type="entry name" value="A_thl_para_3677"/>
    <property type="match status" value="1"/>
</dbReference>
<dbReference type="PANTHER" id="PTHR31260:SF77">
    <property type="entry name" value="(RAPE) HYPOTHETICAL PROTEIN"/>
    <property type="match status" value="1"/>
</dbReference>
<dbReference type="PANTHER" id="PTHR31260">
    <property type="entry name" value="CYSTATIN/MONELLIN SUPERFAMILY PROTEIN"/>
    <property type="match status" value="1"/>
</dbReference>
<dbReference type="Pfam" id="PF04776">
    <property type="entry name" value="protein_MS5"/>
    <property type="match status" value="1"/>
</dbReference>
<keyword id="KW-1185">Reference proteome</keyword>
<proteinExistence type="inferred from homology"/>
<sequence>MSTEDALCFTGEEYARHVREYWRGVAESDGFDSEDIRSPVVLTGLFHYDCQSGRRYPDPLLVKRYALLGLHRFNILQGTSFELDALQKFNKTMNLTSSYYITLLANEPGAIPLQKTFQVRVDERKYDTLDLTVAIARLKKDQNEAAETTKEPFVPHFCCSAVSDGVFQGPLPDWPSDDALRHDRNRFYELEKSEWQATDWISLYLELLILATDRGMFGVAQTGLPQVQILKVVIETEEENEKPLDKRLNARRAHVYITFTGLPKSPRLVEIGEHVERKAIIRRVIDDSGYLTLLGKFWSGKDTEQRSKTRQSEEKVESSQKRSRLC</sequence>
<reference key="1">
    <citation type="journal article" date="2000" name="Nature">
        <title>Sequence and analysis of chromosome 1 of the plant Arabidopsis thaliana.</title>
        <authorList>
            <person name="Theologis A."/>
            <person name="Ecker J.R."/>
            <person name="Palm C.J."/>
            <person name="Federspiel N.A."/>
            <person name="Kaul S."/>
            <person name="White O."/>
            <person name="Alonso J."/>
            <person name="Altafi H."/>
            <person name="Araujo R."/>
            <person name="Bowman C.L."/>
            <person name="Brooks S.Y."/>
            <person name="Buehler E."/>
            <person name="Chan A."/>
            <person name="Chao Q."/>
            <person name="Chen H."/>
            <person name="Cheuk R.F."/>
            <person name="Chin C.W."/>
            <person name="Chung M.K."/>
            <person name="Conn L."/>
            <person name="Conway A.B."/>
            <person name="Conway A.R."/>
            <person name="Creasy T.H."/>
            <person name="Dewar K."/>
            <person name="Dunn P."/>
            <person name="Etgu P."/>
            <person name="Feldblyum T.V."/>
            <person name="Feng J.-D."/>
            <person name="Fong B."/>
            <person name="Fujii C.Y."/>
            <person name="Gill J.E."/>
            <person name="Goldsmith A.D."/>
            <person name="Haas B."/>
            <person name="Hansen N.F."/>
            <person name="Hughes B."/>
            <person name="Huizar L."/>
            <person name="Hunter J.L."/>
            <person name="Jenkins J."/>
            <person name="Johnson-Hopson C."/>
            <person name="Khan S."/>
            <person name="Khaykin E."/>
            <person name="Kim C.J."/>
            <person name="Koo H.L."/>
            <person name="Kremenetskaia I."/>
            <person name="Kurtz D.B."/>
            <person name="Kwan A."/>
            <person name="Lam B."/>
            <person name="Langin-Hooper S."/>
            <person name="Lee A."/>
            <person name="Lee J.M."/>
            <person name="Lenz C.A."/>
            <person name="Li J.H."/>
            <person name="Li Y.-P."/>
            <person name="Lin X."/>
            <person name="Liu S.X."/>
            <person name="Liu Z.A."/>
            <person name="Luros J.S."/>
            <person name="Maiti R."/>
            <person name="Marziali A."/>
            <person name="Militscher J."/>
            <person name="Miranda M."/>
            <person name="Nguyen M."/>
            <person name="Nierman W.C."/>
            <person name="Osborne B.I."/>
            <person name="Pai G."/>
            <person name="Peterson J."/>
            <person name="Pham P.K."/>
            <person name="Rizzo M."/>
            <person name="Rooney T."/>
            <person name="Rowley D."/>
            <person name="Sakano H."/>
            <person name="Salzberg S.L."/>
            <person name="Schwartz J.R."/>
            <person name="Shinn P."/>
            <person name="Southwick A.M."/>
            <person name="Sun H."/>
            <person name="Tallon L.J."/>
            <person name="Tambunga G."/>
            <person name="Toriumi M.J."/>
            <person name="Town C.D."/>
            <person name="Utterback T."/>
            <person name="Van Aken S."/>
            <person name="Vaysberg M."/>
            <person name="Vysotskaia V.S."/>
            <person name="Walker M."/>
            <person name="Wu D."/>
            <person name="Yu G."/>
            <person name="Fraser C.M."/>
            <person name="Venter J.C."/>
            <person name="Davis R.W."/>
        </authorList>
    </citation>
    <scope>NUCLEOTIDE SEQUENCE [LARGE SCALE GENOMIC DNA]</scope>
    <source>
        <strain>cv. Columbia</strain>
    </source>
</reference>
<reference key="2">
    <citation type="journal article" date="2017" name="Plant J.">
        <title>Araport11: a complete reannotation of the Arabidopsis thaliana reference genome.</title>
        <authorList>
            <person name="Cheng C.Y."/>
            <person name="Krishnakumar V."/>
            <person name="Chan A.P."/>
            <person name="Thibaud-Nissen F."/>
            <person name="Schobel S."/>
            <person name="Town C.D."/>
        </authorList>
    </citation>
    <scope>GENOME REANNOTATION</scope>
    <source>
        <strain>cv. Columbia</strain>
    </source>
</reference>
<feature type="chain" id="PRO_0000363119" description="Putative UPF0725 protein At1g28500">
    <location>
        <begin position="1"/>
        <end position="326"/>
    </location>
</feature>
<feature type="region of interest" description="Disordered" evidence="1">
    <location>
        <begin position="301"/>
        <end position="326"/>
    </location>
</feature>
<feature type="compositionally biased region" description="Basic and acidic residues" evidence="1">
    <location>
        <begin position="301"/>
        <end position="320"/>
    </location>
</feature>
<protein>
    <recommendedName>
        <fullName>Putative UPF0725 protein At1g28500</fullName>
    </recommendedName>
</protein>
<evidence type="ECO:0000256" key="1">
    <source>
        <dbReference type="SAM" id="MobiDB-lite"/>
    </source>
</evidence>
<evidence type="ECO:0000305" key="2"/>
<comment type="similarity">
    <text evidence="2">Belongs to the UPF0725 (EMB2204) family.</text>
</comment>
<gene>
    <name type="ordered locus">At1g28500</name>
    <name type="ORF">F3M18.6</name>
</gene>
<name>Y1285_ARATH</name>
<organism>
    <name type="scientific">Arabidopsis thaliana</name>
    <name type="common">Mouse-ear cress</name>
    <dbReference type="NCBI Taxonomy" id="3702"/>
    <lineage>
        <taxon>Eukaryota</taxon>
        <taxon>Viridiplantae</taxon>
        <taxon>Streptophyta</taxon>
        <taxon>Embryophyta</taxon>
        <taxon>Tracheophyta</taxon>
        <taxon>Spermatophyta</taxon>
        <taxon>Magnoliopsida</taxon>
        <taxon>eudicotyledons</taxon>
        <taxon>Gunneridae</taxon>
        <taxon>Pentapetalae</taxon>
        <taxon>rosids</taxon>
        <taxon>malvids</taxon>
        <taxon>Brassicales</taxon>
        <taxon>Brassicaceae</taxon>
        <taxon>Camelineae</taxon>
        <taxon>Arabidopsis</taxon>
    </lineage>
</organism>
<accession>Q9SGP8</accession>